<protein>
    <recommendedName>
        <fullName>Glucose-1-phosphate thymidylyltransferase</fullName>
        <ecNumber>2.7.7.24</ecNumber>
    </recommendedName>
    <alternativeName>
        <fullName>dTDP-glucose synthase</fullName>
    </alternativeName>
</protein>
<accession>P29785</accession>
<gene>
    <name type="primary">strO</name>
</gene>
<reference key="1">
    <citation type="submission" date="1996-10" db="EMBL/GenBank/DDBJ databases">
        <authorList>
            <person name="Ahlert J."/>
            <person name="Distler J."/>
            <person name="Mansouri K."/>
            <person name="Roggel M."/>
            <person name="Altenbach H.J."/>
            <person name="Piepersberg W."/>
        </authorList>
    </citation>
    <scope>NUCLEOTIDE SEQUENCE [GENOMIC DNA]</scope>
    <scope>SEQUENCE REVISION TO 33</scope>
    <source>
        <strain>N2-3-11</strain>
    </source>
</reference>
<reference key="2">
    <citation type="journal article" date="1991" name="Mol. Gen. Genet.">
        <title>Genetics of streptomycin production in Streptomyces griseus: molecular structure and putative function of genes strELMB2N.</title>
        <authorList>
            <person name="Pissowotzki K."/>
            <person name="Mansouri K."/>
            <person name="Piepersberg W."/>
        </authorList>
    </citation>
    <scope>NUCLEOTIDE SEQUENCE [GENOMIC DNA] OF 1-83</scope>
    <source>
        <strain>N2-3-11</strain>
    </source>
</reference>
<sequence length="259" mass="27858">MTDNDSDVRLAHRLAEIADTLAWEFFGGAPAVRHKSDGSPVSEADLAVEKALLAVLAAERPGDAVLTEESGSLGTRSSRRRWILDPIDGTIPFLAGERGWGTHVALEVDEELRTAVLSRPTERSRWWAVRGRGAFTSVRGEPLSAARPLRIPSAPLPLEAARVGGFLMPDSPVEPVRDRMRWVESSVCLVGDLLEGRVDAVIDEGGHVWDRAPAALLVHEAGGRVDDLRGGGRLDERWLVYAADGVADGLAGLLRDVGA</sequence>
<dbReference type="EC" id="2.7.7.24"/>
<dbReference type="EMBL" id="Y08763">
    <property type="protein sequence ID" value="CAA70009.1"/>
    <property type="molecule type" value="Genomic_DNA"/>
</dbReference>
<dbReference type="EMBL" id="X62567">
    <property type="protein sequence ID" value="CAA44446.1"/>
    <property type="status" value="ALT_SEQ"/>
    <property type="molecule type" value="Genomic_DNA"/>
</dbReference>
<dbReference type="PIR" id="S19785">
    <property type="entry name" value="S19785"/>
</dbReference>
<dbReference type="RefSeq" id="WP_003970231.1">
    <property type="nucleotide sequence ID" value="NZ_UAVD01000010.1"/>
</dbReference>
<dbReference type="SMR" id="P29785"/>
<dbReference type="OMA" id="HVWDRAP"/>
<dbReference type="OrthoDB" id="9772456at2"/>
<dbReference type="UniPathway" id="UPA00066"/>
<dbReference type="GO" id="GO:0008879">
    <property type="term" value="F:glucose-1-phosphate thymidylyltransferase activity"/>
    <property type="evidence" value="ECO:0007669"/>
    <property type="project" value="UniProtKB-EC"/>
</dbReference>
<dbReference type="GO" id="GO:0008934">
    <property type="term" value="F:inositol monophosphate 1-phosphatase activity"/>
    <property type="evidence" value="ECO:0007669"/>
    <property type="project" value="TreeGrafter"/>
</dbReference>
<dbReference type="GO" id="GO:0006020">
    <property type="term" value="P:inositol metabolic process"/>
    <property type="evidence" value="ECO:0007669"/>
    <property type="project" value="TreeGrafter"/>
</dbReference>
<dbReference type="GO" id="GO:0007165">
    <property type="term" value="P:signal transduction"/>
    <property type="evidence" value="ECO:0007669"/>
    <property type="project" value="TreeGrafter"/>
</dbReference>
<dbReference type="GO" id="GO:0019872">
    <property type="term" value="P:streptomycin biosynthetic process"/>
    <property type="evidence" value="ECO:0007669"/>
    <property type="project" value="UniProtKB-UniPathway"/>
</dbReference>
<dbReference type="CDD" id="cd01637">
    <property type="entry name" value="IMPase_like"/>
    <property type="match status" value="1"/>
</dbReference>
<dbReference type="Gene3D" id="3.40.190.80">
    <property type="match status" value="1"/>
</dbReference>
<dbReference type="Gene3D" id="3.30.540.10">
    <property type="entry name" value="Fructose-1,6-Bisphosphatase, subunit A, domain 1"/>
    <property type="match status" value="1"/>
</dbReference>
<dbReference type="InterPro" id="IPR000760">
    <property type="entry name" value="Inositol_monophosphatase-like"/>
</dbReference>
<dbReference type="PANTHER" id="PTHR20854">
    <property type="entry name" value="INOSITOL MONOPHOSPHATASE"/>
    <property type="match status" value="1"/>
</dbReference>
<dbReference type="PANTHER" id="PTHR20854:SF4">
    <property type="entry name" value="INOSITOL-1-MONOPHOSPHATASE-RELATED"/>
    <property type="match status" value="1"/>
</dbReference>
<dbReference type="Pfam" id="PF00459">
    <property type="entry name" value="Inositol_P"/>
    <property type="match status" value="1"/>
</dbReference>
<dbReference type="PRINTS" id="PR00377">
    <property type="entry name" value="IMPHPHTASES"/>
</dbReference>
<dbReference type="SUPFAM" id="SSF56655">
    <property type="entry name" value="Carbohydrate phosphatase"/>
    <property type="match status" value="1"/>
</dbReference>
<evidence type="ECO:0000305" key="1"/>
<organism>
    <name type="scientific">Streptomyces griseus</name>
    <dbReference type="NCBI Taxonomy" id="1911"/>
    <lineage>
        <taxon>Bacteria</taxon>
        <taxon>Bacillati</taxon>
        <taxon>Actinomycetota</taxon>
        <taxon>Actinomycetes</taxon>
        <taxon>Kitasatosporales</taxon>
        <taxon>Streptomycetaceae</taxon>
        <taxon>Streptomyces</taxon>
    </lineage>
</organism>
<feature type="chain" id="PRO_0000072287" description="Glucose-1-phosphate thymidylyltransferase">
    <location>
        <begin position="1"/>
        <end position="259"/>
    </location>
</feature>
<comment type="catalytic activity">
    <reaction>
        <text>dTTP + alpha-D-glucose 1-phosphate + H(+) = dTDP-alpha-D-glucose + diphosphate</text>
        <dbReference type="Rhea" id="RHEA:15225"/>
        <dbReference type="ChEBI" id="CHEBI:15378"/>
        <dbReference type="ChEBI" id="CHEBI:33019"/>
        <dbReference type="ChEBI" id="CHEBI:37568"/>
        <dbReference type="ChEBI" id="CHEBI:57477"/>
        <dbReference type="ChEBI" id="CHEBI:58601"/>
        <dbReference type="EC" id="2.7.7.24"/>
    </reaction>
</comment>
<comment type="pathway">
    <text>Antibiotic biosynthesis; streptomycin biosynthesis.</text>
</comment>
<comment type="similarity">
    <text evidence="1">Belongs to the inositol monophosphatase superfamily.</text>
</comment>
<proteinExistence type="inferred from homology"/>
<name>STRO_STRGR</name>
<keyword id="KW-0045">Antibiotic biosynthesis</keyword>
<keyword id="KW-0759">Streptomycin biosynthesis</keyword>
<keyword id="KW-0808">Transferase</keyword>